<evidence type="ECO:0000255" key="1">
    <source>
        <dbReference type="HAMAP-Rule" id="MF_01315"/>
    </source>
</evidence>
<evidence type="ECO:0000256" key="2">
    <source>
        <dbReference type="SAM" id="MobiDB-lite"/>
    </source>
</evidence>
<evidence type="ECO:0000305" key="3"/>
<reference key="1">
    <citation type="submission" date="2006-02" db="EMBL/GenBank/DDBJ databases">
        <title>Complete sequence of chromosome of Jannaschia sp. CCS1.</title>
        <authorList>
            <consortium name="US DOE Joint Genome Institute"/>
            <person name="Copeland A."/>
            <person name="Lucas S."/>
            <person name="Lapidus A."/>
            <person name="Barry K."/>
            <person name="Detter J.C."/>
            <person name="Glavina del Rio T."/>
            <person name="Hammon N."/>
            <person name="Israni S."/>
            <person name="Pitluck S."/>
            <person name="Brettin T."/>
            <person name="Bruce D."/>
            <person name="Han C."/>
            <person name="Tapia R."/>
            <person name="Gilna P."/>
            <person name="Chertkov O."/>
            <person name="Saunders E."/>
            <person name="Schmutz J."/>
            <person name="Larimer F."/>
            <person name="Land M."/>
            <person name="Kyrpides N."/>
            <person name="Lykidis A."/>
            <person name="Moran M.A."/>
            <person name="Belas R."/>
            <person name="Ye W."/>
            <person name="Buchan A."/>
            <person name="Gonzalez J.M."/>
            <person name="Schell M.A."/>
            <person name="Richardson P."/>
        </authorList>
    </citation>
    <scope>NUCLEOTIDE SEQUENCE [LARGE SCALE GENOMIC DNA]</scope>
    <source>
        <strain>CCS1</strain>
    </source>
</reference>
<gene>
    <name evidence="1" type="primary">rpsM</name>
    <name type="ordered locus">Jann_0615</name>
</gene>
<dbReference type="EMBL" id="CP000264">
    <property type="protein sequence ID" value="ABD53532.1"/>
    <property type="molecule type" value="Genomic_DNA"/>
</dbReference>
<dbReference type="RefSeq" id="WP_011453740.1">
    <property type="nucleotide sequence ID" value="NC_007802.1"/>
</dbReference>
<dbReference type="SMR" id="Q28UT0"/>
<dbReference type="STRING" id="290400.Jann_0615"/>
<dbReference type="KEGG" id="jan:Jann_0615"/>
<dbReference type="eggNOG" id="COG0099">
    <property type="taxonomic scope" value="Bacteria"/>
</dbReference>
<dbReference type="HOGENOM" id="CLU_103849_1_2_5"/>
<dbReference type="OrthoDB" id="9803610at2"/>
<dbReference type="Proteomes" id="UP000008326">
    <property type="component" value="Chromosome"/>
</dbReference>
<dbReference type="GO" id="GO:0005829">
    <property type="term" value="C:cytosol"/>
    <property type="evidence" value="ECO:0007669"/>
    <property type="project" value="TreeGrafter"/>
</dbReference>
<dbReference type="GO" id="GO:0015935">
    <property type="term" value="C:small ribosomal subunit"/>
    <property type="evidence" value="ECO:0007669"/>
    <property type="project" value="TreeGrafter"/>
</dbReference>
<dbReference type="GO" id="GO:0019843">
    <property type="term" value="F:rRNA binding"/>
    <property type="evidence" value="ECO:0007669"/>
    <property type="project" value="UniProtKB-UniRule"/>
</dbReference>
<dbReference type="GO" id="GO:0003735">
    <property type="term" value="F:structural constituent of ribosome"/>
    <property type="evidence" value="ECO:0007669"/>
    <property type="project" value="InterPro"/>
</dbReference>
<dbReference type="GO" id="GO:0000049">
    <property type="term" value="F:tRNA binding"/>
    <property type="evidence" value="ECO:0007669"/>
    <property type="project" value="UniProtKB-UniRule"/>
</dbReference>
<dbReference type="GO" id="GO:0006412">
    <property type="term" value="P:translation"/>
    <property type="evidence" value="ECO:0007669"/>
    <property type="project" value="UniProtKB-UniRule"/>
</dbReference>
<dbReference type="FunFam" id="1.10.8.50:FF:000001">
    <property type="entry name" value="30S ribosomal protein S13"/>
    <property type="match status" value="1"/>
</dbReference>
<dbReference type="FunFam" id="4.10.910.10:FF:000001">
    <property type="entry name" value="30S ribosomal protein S13"/>
    <property type="match status" value="1"/>
</dbReference>
<dbReference type="Gene3D" id="1.10.8.50">
    <property type="match status" value="1"/>
</dbReference>
<dbReference type="Gene3D" id="4.10.910.10">
    <property type="entry name" value="30s ribosomal protein s13, domain 2"/>
    <property type="match status" value="1"/>
</dbReference>
<dbReference type="HAMAP" id="MF_01315">
    <property type="entry name" value="Ribosomal_uS13"/>
    <property type="match status" value="1"/>
</dbReference>
<dbReference type="InterPro" id="IPR027437">
    <property type="entry name" value="Rbsml_uS13_C"/>
</dbReference>
<dbReference type="InterPro" id="IPR001892">
    <property type="entry name" value="Ribosomal_uS13"/>
</dbReference>
<dbReference type="InterPro" id="IPR010979">
    <property type="entry name" value="Ribosomal_uS13-like_H2TH"/>
</dbReference>
<dbReference type="InterPro" id="IPR019980">
    <property type="entry name" value="Ribosomal_uS13_bac-type"/>
</dbReference>
<dbReference type="InterPro" id="IPR018269">
    <property type="entry name" value="Ribosomal_uS13_CS"/>
</dbReference>
<dbReference type="NCBIfam" id="TIGR03631">
    <property type="entry name" value="uS13_bact"/>
    <property type="match status" value="1"/>
</dbReference>
<dbReference type="PANTHER" id="PTHR10871">
    <property type="entry name" value="30S RIBOSOMAL PROTEIN S13/40S RIBOSOMAL PROTEIN S18"/>
    <property type="match status" value="1"/>
</dbReference>
<dbReference type="PANTHER" id="PTHR10871:SF1">
    <property type="entry name" value="SMALL RIBOSOMAL SUBUNIT PROTEIN US13M"/>
    <property type="match status" value="1"/>
</dbReference>
<dbReference type="Pfam" id="PF00416">
    <property type="entry name" value="Ribosomal_S13"/>
    <property type="match status" value="1"/>
</dbReference>
<dbReference type="PIRSF" id="PIRSF002134">
    <property type="entry name" value="Ribosomal_S13"/>
    <property type="match status" value="1"/>
</dbReference>
<dbReference type="SUPFAM" id="SSF46946">
    <property type="entry name" value="S13-like H2TH domain"/>
    <property type="match status" value="1"/>
</dbReference>
<dbReference type="PROSITE" id="PS00646">
    <property type="entry name" value="RIBOSOMAL_S13_1"/>
    <property type="match status" value="1"/>
</dbReference>
<dbReference type="PROSITE" id="PS50159">
    <property type="entry name" value="RIBOSOMAL_S13_2"/>
    <property type="match status" value="1"/>
</dbReference>
<protein>
    <recommendedName>
        <fullName evidence="1">Small ribosomal subunit protein uS13</fullName>
    </recommendedName>
    <alternativeName>
        <fullName evidence="3">30S ribosomal protein S13</fullName>
    </alternativeName>
</protein>
<accession>Q28UT0</accession>
<keyword id="KW-1185">Reference proteome</keyword>
<keyword id="KW-0687">Ribonucleoprotein</keyword>
<keyword id="KW-0689">Ribosomal protein</keyword>
<keyword id="KW-0694">RNA-binding</keyword>
<keyword id="KW-0699">rRNA-binding</keyword>
<keyword id="KW-0820">tRNA-binding</keyword>
<sequence length="122" mass="13453">MARIAGVNIPTAKRVPIALTYVTGIGHTSAAAICEAVGIDVTRRVNELSDAEVLAIREHIDANYAVEGDLRRETQMNIKRLMDLGCYRGLRHRRNLPVRGQRTHTNARTRKGPAKAIAGKKK</sequence>
<organism>
    <name type="scientific">Jannaschia sp. (strain CCS1)</name>
    <dbReference type="NCBI Taxonomy" id="290400"/>
    <lineage>
        <taxon>Bacteria</taxon>
        <taxon>Pseudomonadati</taxon>
        <taxon>Pseudomonadota</taxon>
        <taxon>Alphaproteobacteria</taxon>
        <taxon>Rhodobacterales</taxon>
        <taxon>Roseobacteraceae</taxon>
        <taxon>Jannaschia</taxon>
    </lineage>
</organism>
<proteinExistence type="inferred from homology"/>
<feature type="chain" id="PRO_0000306623" description="Small ribosomal subunit protein uS13">
    <location>
        <begin position="1"/>
        <end position="122"/>
    </location>
</feature>
<feature type="region of interest" description="Disordered" evidence="2">
    <location>
        <begin position="98"/>
        <end position="122"/>
    </location>
</feature>
<comment type="function">
    <text evidence="1">Located at the top of the head of the 30S subunit, it contacts several helices of the 16S rRNA. In the 70S ribosome it contacts the 23S rRNA (bridge B1a) and protein L5 of the 50S subunit (bridge B1b), connecting the 2 subunits; these bridges are implicated in subunit movement. Contacts the tRNAs in the A and P-sites.</text>
</comment>
<comment type="subunit">
    <text evidence="1">Part of the 30S ribosomal subunit. Forms a loose heterodimer with protein S19. Forms two bridges to the 50S subunit in the 70S ribosome.</text>
</comment>
<comment type="similarity">
    <text evidence="1">Belongs to the universal ribosomal protein uS13 family.</text>
</comment>
<name>RS13_JANSC</name>